<organism>
    <name type="scientific">Vibrio vulnificus (strain CMCP6)</name>
    <dbReference type="NCBI Taxonomy" id="216895"/>
    <lineage>
        <taxon>Bacteria</taxon>
        <taxon>Pseudomonadati</taxon>
        <taxon>Pseudomonadota</taxon>
        <taxon>Gammaproteobacteria</taxon>
        <taxon>Vibrionales</taxon>
        <taxon>Vibrionaceae</taxon>
        <taxon>Vibrio</taxon>
    </lineage>
</organism>
<reference key="1">
    <citation type="submission" date="2002-12" db="EMBL/GenBank/DDBJ databases">
        <title>Complete genome sequence of Vibrio vulnificus CMCP6.</title>
        <authorList>
            <person name="Rhee J.H."/>
            <person name="Kim S.Y."/>
            <person name="Chung S.S."/>
            <person name="Kim J.J."/>
            <person name="Moon Y.H."/>
            <person name="Jeong H."/>
            <person name="Choy H.E."/>
        </authorList>
    </citation>
    <scope>NUCLEOTIDE SEQUENCE [LARGE SCALE GENOMIC DNA]</scope>
    <source>
        <strain>CMCP6</strain>
    </source>
</reference>
<proteinExistence type="inferred from homology"/>
<comment type="function">
    <text evidence="1">Binds together with bS18 to 16S ribosomal RNA.</text>
</comment>
<comment type="similarity">
    <text evidence="1">Belongs to the bacterial ribosomal protein bS6 family.</text>
</comment>
<evidence type="ECO:0000255" key="1">
    <source>
        <dbReference type="HAMAP-Rule" id="MF_00360"/>
    </source>
</evidence>
<evidence type="ECO:0000256" key="2">
    <source>
        <dbReference type="SAM" id="MobiDB-lite"/>
    </source>
</evidence>
<evidence type="ECO:0000305" key="3"/>
<protein>
    <recommendedName>
        <fullName evidence="1">Small ribosomal subunit protein bS6</fullName>
    </recommendedName>
    <alternativeName>
        <fullName evidence="3">30S ribosomal protein S6</fullName>
    </alternativeName>
</protein>
<name>RS6_VIBVU</name>
<accession>Q8DCL6</accession>
<feature type="chain" id="PRO_0000176873" description="Small ribosomal subunit protein bS6">
    <location>
        <begin position="1"/>
        <end position="123"/>
    </location>
</feature>
<feature type="region of interest" description="Disordered" evidence="2">
    <location>
        <begin position="102"/>
        <end position="123"/>
    </location>
</feature>
<feature type="compositionally biased region" description="Basic and acidic residues" evidence="2">
    <location>
        <begin position="104"/>
        <end position="123"/>
    </location>
</feature>
<dbReference type="EMBL" id="AE016795">
    <property type="protein sequence ID" value="AAO09836.1"/>
    <property type="molecule type" value="Genomic_DNA"/>
</dbReference>
<dbReference type="RefSeq" id="WP_011079362.1">
    <property type="nucleotide sequence ID" value="NC_004459.3"/>
</dbReference>
<dbReference type="SMR" id="Q8DCL6"/>
<dbReference type="GeneID" id="93895651"/>
<dbReference type="KEGG" id="vvu:VV1_1387"/>
<dbReference type="HOGENOM" id="CLU_113441_6_1_6"/>
<dbReference type="Proteomes" id="UP000002275">
    <property type="component" value="Chromosome 1"/>
</dbReference>
<dbReference type="GO" id="GO:0022627">
    <property type="term" value="C:cytosolic small ribosomal subunit"/>
    <property type="evidence" value="ECO:0007669"/>
    <property type="project" value="TreeGrafter"/>
</dbReference>
<dbReference type="GO" id="GO:0070181">
    <property type="term" value="F:small ribosomal subunit rRNA binding"/>
    <property type="evidence" value="ECO:0007669"/>
    <property type="project" value="TreeGrafter"/>
</dbReference>
<dbReference type="GO" id="GO:0003735">
    <property type="term" value="F:structural constituent of ribosome"/>
    <property type="evidence" value="ECO:0007669"/>
    <property type="project" value="InterPro"/>
</dbReference>
<dbReference type="GO" id="GO:0006412">
    <property type="term" value="P:translation"/>
    <property type="evidence" value="ECO:0007669"/>
    <property type="project" value="UniProtKB-UniRule"/>
</dbReference>
<dbReference type="CDD" id="cd00473">
    <property type="entry name" value="bS6"/>
    <property type="match status" value="1"/>
</dbReference>
<dbReference type="FunFam" id="3.30.70.60:FF:000003">
    <property type="entry name" value="30S ribosomal protein S6"/>
    <property type="match status" value="1"/>
</dbReference>
<dbReference type="Gene3D" id="3.30.70.60">
    <property type="match status" value="1"/>
</dbReference>
<dbReference type="HAMAP" id="MF_00360">
    <property type="entry name" value="Ribosomal_bS6"/>
    <property type="match status" value="1"/>
</dbReference>
<dbReference type="InterPro" id="IPR000529">
    <property type="entry name" value="Ribosomal_bS6"/>
</dbReference>
<dbReference type="InterPro" id="IPR020815">
    <property type="entry name" value="Ribosomal_bS6_CS"/>
</dbReference>
<dbReference type="InterPro" id="IPR035980">
    <property type="entry name" value="Ribosomal_bS6_sf"/>
</dbReference>
<dbReference type="InterPro" id="IPR020814">
    <property type="entry name" value="Ribosomal_S6_plastid/chlpt"/>
</dbReference>
<dbReference type="InterPro" id="IPR014717">
    <property type="entry name" value="Transl_elong_EF1B/ribsomal_bS6"/>
</dbReference>
<dbReference type="NCBIfam" id="TIGR00166">
    <property type="entry name" value="S6"/>
    <property type="match status" value="1"/>
</dbReference>
<dbReference type="PANTHER" id="PTHR21011">
    <property type="entry name" value="MITOCHONDRIAL 28S RIBOSOMAL PROTEIN S6"/>
    <property type="match status" value="1"/>
</dbReference>
<dbReference type="PANTHER" id="PTHR21011:SF1">
    <property type="entry name" value="SMALL RIBOSOMAL SUBUNIT PROTEIN BS6M"/>
    <property type="match status" value="1"/>
</dbReference>
<dbReference type="Pfam" id="PF01250">
    <property type="entry name" value="Ribosomal_S6"/>
    <property type="match status" value="1"/>
</dbReference>
<dbReference type="SUPFAM" id="SSF54995">
    <property type="entry name" value="Ribosomal protein S6"/>
    <property type="match status" value="1"/>
</dbReference>
<dbReference type="PROSITE" id="PS01048">
    <property type="entry name" value="RIBOSOMAL_S6"/>
    <property type="match status" value="1"/>
</dbReference>
<keyword id="KW-0687">Ribonucleoprotein</keyword>
<keyword id="KW-0689">Ribosomal protein</keyword>
<keyword id="KW-0694">RNA-binding</keyword>
<keyword id="KW-0699">rRNA-binding</keyword>
<sequence>MRHYEIVFMVHPDQSEQVAGMIERYTGSITEAGGKIHRLEDWGRRQLAYPINKLHKAHYVLMNVEADQAVIDELETAFRYNDAVLRNMIMRTKAAITEPSIMLKQKEERAPRREAEAKEFAAE</sequence>
<gene>
    <name evidence="1" type="primary">rpsF</name>
    <name type="ordered locus">VV1_1387</name>
</gene>